<keyword id="KW-0238">DNA-binding</keyword>
<keyword id="KW-0479">Metal-binding</keyword>
<keyword id="KW-0539">Nucleus</keyword>
<keyword id="KW-1267">Proteomics identification</keyword>
<keyword id="KW-1185">Reference proteome</keyword>
<keyword id="KW-0677">Repeat</keyword>
<keyword id="KW-0804">Transcription</keyword>
<keyword id="KW-0805">Transcription regulation</keyword>
<keyword id="KW-0862">Zinc</keyword>
<keyword id="KW-0863">Zinc-finger</keyword>
<organism>
    <name type="scientific">Homo sapiens</name>
    <name type="common">Human</name>
    <dbReference type="NCBI Taxonomy" id="9606"/>
    <lineage>
        <taxon>Eukaryota</taxon>
        <taxon>Metazoa</taxon>
        <taxon>Chordata</taxon>
        <taxon>Craniata</taxon>
        <taxon>Vertebrata</taxon>
        <taxon>Euteleostomi</taxon>
        <taxon>Mammalia</taxon>
        <taxon>Eutheria</taxon>
        <taxon>Euarchontoglires</taxon>
        <taxon>Primates</taxon>
        <taxon>Haplorrhini</taxon>
        <taxon>Catarrhini</taxon>
        <taxon>Hominidae</taxon>
        <taxon>Homo</taxon>
    </lineage>
</organism>
<gene>
    <name evidence="5" type="primary">ZNF724</name>
    <name evidence="5" type="synonym">ZNF724P</name>
</gene>
<reference key="1">
    <citation type="journal article" date="2004" name="Nat. Genet.">
        <title>Complete sequencing and characterization of 21,243 full-length human cDNAs.</title>
        <authorList>
            <person name="Ota T."/>
            <person name="Suzuki Y."/>
            <person name="Nishikawa T."/>
            <person name="Otsuki T."/>
            <person name="Sugiyama T."/>
            <person name="Irie R."/>
            <person name="Wakamatsu A."/>
            <person name="Hayashi K."/>
            <person name="Sato H."/>
            <person name="Nagai K."/>
            <person name="Kimura K."/>
            <person name="Makita H."/>
            <person name="Sekine M."/>
            <person name="Obayashi M."/>
            <person name="Nishi T."/>
            <person name="Shibahara T."/>
            <person name="Tanaka T."/>
            <person name="Ishii S."/>
            <person name="Yamamoto J."/>
            <person name="Saito K."/>
            <person name="Kawai Y."/>
            <person name="Isono Y."/>
            <person name="Nakamura Y."/>
            <person name="Nagahari K."/>
            <person name="Murakami K."/>
            <person name="Yasuda T."/>
            <person name="Iwayanagi T."/>
            <person name="Wagatsuma M."/>
            <person name="Shiratori A."/>
            <person name="Sudo H."/>
            <person name="Hosoiri T."/>
            <person name="Kaku Y."/>
            <person name="Kodaira H."/>
            <person name="Kondo H."/>
            <person name="Sugawara M."/>
            <person name="Takahashi M."/>
            <person name="Kanda K."/>
            <person name="Yokoi T."/>
            <person name="Furuya T."/>
            <person name="Kikkawa E."/>
            <person name="Omura Y."/>
            <person name="Abe K."/>
            <person name="Kamihara K."/>
            <person name="Katsuta N."/>
            <person name="Sato K."/>
            <person name="Tanikawa M."/>
            <person name="Yamazaki M."/>
            <person name="Ninomiya K."/>
            <person name="Ishibashi T."/>
            <person name="Yamashita H."/>
            <person name="Murakawa K."/>
            <person name="Fujimori K."/>
            <person name="Tanai H."/>
            <person name="Kimata M."/>
            <person name="Watanabe M."/>
            <person name="Hiraoka S."/>
            <person name="Chiba Y."/>
            <person name="Ishida S."/>
            <person name="Ono Y."/>
            <person name="Takiguchi S."/>
            <person name="Watanabe S."/>
            <person name="Yosida M."/>
            <person name="Hotuta T."/>
            <person name="Kusano J."/>
            <person name="Kanehori K."/>
            <person name="Takahashi-Fujii A."/>
            <person name="Hara H."/>
            <person name="Tanase T.-O."/>
            <person name="Nomura Y."/>
            <person name="Togiya S."/>
            <person name="Komai F."/>
            <person name="Hara R."/>
            <person name="Takeuchi K."/>
            <person name="Arita M."/>
            <person name="Imose N."/>
            <person name="Musashino K."/>
            <person name="Yuuki H."/>
            <person name="Oshima A."/>
            <person name="Sasaki N."/>
            <person name="Aotsuka S."/>
            <person name="Yoshikawa Y."/>
            <person name="Matsunawa H."/>
            <person name="Ichihara T."/>
            <person name="Shiohata N."/>
            <person name="Sano S."/>
            <person name="Moriya S."/>
            <person name="Momiyama H."/>
            <person name="Satoh N."/>
            <person name="Takami S."/>
            <person name="Terashima Y."/>
            <person name="Suzuki O."/>
            <person name="Nakagawa S."/>
            <person name="Senoh A."/>
            <person name="Mizoguchi H."/>
            <person name="Goto Y."/>
            <person name="Shimizu F."/>
            <person name="Wakebe H."/>
            <person name="Hishigaki H."/>
            <person name="Watanabe T."/>
            <person name="Sugiyama A."/>
            <person name="Takemoto M."/>
            <person name="Kawakami B."/>
            <person name="Yamazaki M."/>
            <person name="Watanabe K."/>
            <person name="Kumagai A."/>
            <person name="Itakura S."/>
            <person name="Fukuzumi Y."/>
            <person name="Fujimori Y."/>
            <person name="Komiyama M."/>
            <person name="Tashiro H."/>
            <person name="Tanigami A."/>
            <person name="Fujiwara T."/>
            <person name="Ono T."/>
            <person name="Yamada K."/>
            <person name="Fujii Y."/>
            <person name="Ozaki K."/>
            <person name="Hirao M."/>
            <person name="Ohmori Y."/>
            <person name="Kawabata A."/>
            <person name="Hikiji T."/>
            <person name="Kobatake N."/>
            <person name="Inagaki H."/>
            <person name="Ikema Y."/>
            <person name="Okamoto S."/>
            <person name="Okitani R."/>
            <person name="Kawakami T."/>
            <person name="Noguchi S."/>
            <person name="Itoh T."/>
            <person name="Shigeta K."/>
            <person name="Senba T."/>
            <person name="Matsumura K."/>
            <person name="Nakajima Y."/>
            <person name="Mizuno T."/>
            <person name="Morinaga M."/>
            <person name="Sasaki M."/>
            <person name="Togashi T."/>
            <person name="Oyama M."/>
            <person name="Hata H."/>
            <person name="Watanabe M."/>
            <person name="Komatsu T."/>
            <person name="Mizushima-Sugano J."/>
            <person name="Satoh T."/>
            <person name="Shirai Y."/>
            <person name="Takahashi Y."/>
            <person name="Nakagawa K."/>
            <person name="Okumura K."/>
            <person name="Nagase T."/>
            <person name="Nomura N."/>
            <person name="Kikuchi H."/>
            <person name="Masuho Y."/>
            <person name="Yamashita R."/>
            <person name="Nakai K."/>
            <person name="Yada T."/>
            <person name="Nakamura Y."/>
            <person name="Ohara O."/>
            <person name="Isogai T."/>
            <person name="Sugano S."/>
        </authorList>
    </citation>
    <scope>NUCLEOTIDE SEQUENCE [LARGE SCALE MRNA]</scope>
    <source>
        <tissue>Spleen</tissue>
    </source>
</reference>
<reference key="2">
    <citation type="journal article" date="2004" name="Nature">
        <title>The DNA sequence and biology of human chromosome 19.</title>
        <authorList>
            <person name="Grimwood J."/>
            <person name="Gordon L.A."/>
            <person name="Olsen A.S."/>
            <person name="Terry A."/>
            <person name="Schmutz J."/>
            <person name="Lamerdin J.E."/>
            <person name="Hellsten U."/>
            <person name="Goodstein D."/>
            <person name="Couronne O."/>
            <person name="Tran-Gyamfi M."/>
            <person name="Aerts A."/>
            <person name="Altherr M."/>
            <person name="Ashworth L."/>
            <person name="Bajorek E."/>
            <person name="Black S."/>
            <person name="Branscomb E."/>
            <person name="Caenepeel S."/>
            <person name="Carrano A.V."/>
            <person name="Caoile C."/>
            <person name="Chan Y.M."/>
            <person name="Christensen M."/>
            <person name="Cleland C.A."/>
            <person name="Copeland A."/>
            <person name="Dalin E."/>
            <person name="Dehal P."/>
            <person name="Denys M."/>
            <person name="Detter J.C."/>
            <person name="Escobar J."/>
            <person name="Flowers D."/>
            <person name="Fotopulos D."/>
            <person name="Garcia C."/>
            <person name="Georgescu A.M."/>
            <person name="Glavina T."/>
            <person name="Gomez M."/>
            <person name="Gonzales E."/>
            <person name="Groza M."/>
            <person name="Hammon N."/>
            <person name="Hawkins T."/>
            <person name="Haydu L."/>
            <person name="Ho I."/>
            <person name="Huang W."/>
            <person name="Israni S."/>
            <person name="Jett J."/>
            <person name="Kadner K."/>
            <person name="Kimball H."/>
            <person name="Kobayashi A."/>
            <person name="Larionov V."/>
            <person name="Leem S.-H."/>
            <person name="Lopez F."/>
            <person name="Lou Y."/>
            <person name="Lowry S."/>
            <person name="Malfatti S."/>
            <person name="Martinez D."/>
            <person name="McCready P.M."/>
            <person name="Medina C."/>
            <person name="Morgan J."/>
            <person name="Nelson K."/>
            <person name="Nolan M."/>
            <person name="Ovcharenko I."/>
            <person name="Pitluck S."/>
            <person name="Pollard M."/>
            <person name="Popkie A.P."/>
            <person name="Predki P."/>
            <person name="Quan G."/>
            <person name="Ramirez L."/>
            <person name="Rash S."/>
            <person name="Retterer J."/>
            <person name="Rodriguez A."/>
            <person name="Rogers S."/>
            <person name="Salamov A."/>
            <person name="Salazar A."/>
            <person name="She X."/>
            <person name="Smith D."/>
            <person name="Slezak T."/>
            <person name="Solovyev V."/>
            <person name="Thayer N."/>
            <person name="Tice H."/>
            <person name="Tsai M."/>
            <person name="Ustaszewska A."/>
            <person name="Vo N."/>
            <person name="Wagner M."/>
            <person name="Wheeler J."/>
            <person name="Wu K."/>
            <person name="Xie G."/>
            <person name="Yang J."/>
            <person name="Dubchak I."/>
            <person name="Furey T.S."/>
            <person name="DeJong P."/>
            <person name="Dickson M."/>
            <person name="Gordon D."/>
            <person name="Eichler E.E."/>
            <person name="Pennacchio L.A."/>
            <person name="Richardson P."/>
            <person name="Stubbs L."/>
            <person name="Rokhsar D.S."/>
            <person name="Myers R.M."/>
            <person name="Rubin E.M."/>
            <person name="Lucas S.M."/>
        </authorList>
    </citation>
    <scope>NUCLEOTIDE SEQUENCE [LARGE SCALE GENOMIC DNA]</scope>
</reference>
<proteinExistence type="evidence at protein level"/>
<protein>
    <recommendedName>
        <fullName evidence="4">Zinc finger protein 724</fullName>
    </recommendedName>
</protein>
<sequence length="619" mass="71172">MGPLTFMDVAIEFSVEEWQCLDTAQQNLYRNVMLENYRNLVFLGIAVSKPDLITCLEQGKEPWNMERHEMVAKPPGMCCYFAQDLRPEQSIKASLQRIILRKYEKCGHHNLQLKKGYKSVDEYKVHKGSYNGFNQCLTTTQSKIFQCDKYVKDFHKFSNSNRHKTEKNPFKCKECGKSFCVLSHLTQHKRIHTTVNSYKLEECGKAFNVSSTLSQHKRIHTGQKHYKCEECGIAFNKSSHLNTHKIIHTGEKSYKREECGKAFNISSHLTTHKIIHTGENAYKCKECGKAFNQSSTLTRHKIIHAGEKPYICEHCGRAFNQSSNLTKHKRIHTGDKPYKCEECGKAFNVSSTLTQHKRIHTGEKPYKCEECGKAFNVSSTLTQHKRIHTGEKPYKCEECGKAFNTSSHLTTHKRIHTGEKPYKCEECGKAFNQFSQLTTHKIIHTGEKPYKCKECGKAFKRSSNLTEHRIIHTGEKPYKCEECGKAFNLSSHLTTHKKIHTGEKPYKCKECGKAFNQSSTLARHKIIHAGEKPYKCEECGKAFYQYSNLTQHKIIHTGEKPYKCEECGKAFNWSSTLTKHKVIHTGEKPYKCKECGKAFNQCSNLTTHKKIHAVEKSDK</sequence>
<name>ZN724_HUMAN</name>
<dbReference type="EMBL" id="AK301230">
    <property type="protein sequence ID" value="BAG62802.1"/>
    <property type="molecule type" value="mRNA"/>
</dbReference>
<dbReference type="EMBL" id="AC092329">
    <property type="status" value="NOT_ANNOTATED_CDS"/>
    <property type="molecule type" value="Genomic_DNA"/>
</dbReference>
<dbReference type="CCDS" id="CCDS86737.1"/>
<dbReference type="RefSeq" id="NP_001342333.1">
    <property type="nucleotide sequence ID" value="NM_001355404.2"/>
</dbReference>
<dbReference type="SMR" id="A8MTY0"/>
<dbReference type="FunCoup" id="A8MTY0">
    <property type="interactions" value="385"/>
</dbReference>
<dbReference type="IntAct" id="A8MTY0">
    <property type="interactions" value="42"/>
</dbReference>
<dbReference type="STRING" id="9606.ENSP00000413411"/>
<dbReference type="GlyGen" id="A8MTY0">
    <property type="glycosylation" value="4 sites, 2 N-linked glycans (4 sites)"/>
</dbReference>
<dbReference type="iPTMnet" id="A8MTY0"/>
<dbReference type="PhosphoSitePlus" id="A8MTY0"/>
<dbReference type="BioMuta" id="ZNF724"/>
<dbReference type="jPOST" id="A8MTY0"/>
<dbReference type="MassIVE" id="A8MTY0"/>
<dbReference type="PaxDb" id="9606-ENSP00000413411"/>
<dbReference type="PeptideAtlas" id="A8MTY0"/>
<dbReference type="ProteomicsDB" id="2060"/>
<dbReference type="Antibodypedia" id="77550">
    <property type="antibodies" value="4 antibodies from 4 providers"/>
</dbReference>
<dbReference type="Ensembl" id="ENST00000418100.6">
    <property type="protein sequence ID" value="ENSP00000413411.2"/>
    <property type="gene ID" value="ENSG00000196081.10"/>
</dbReference>
<dbReference type="GeneID" id="440519"/>
<dbReference type="MANE-Select" id="ENST00000418100.6">
    <property type="protein sequence ID" value="ENSP00000413411.2"/>
    <property type="RefSeq nucleotide sequence ID" value="NM_001355404.2"/>
    <property type="RefSeq protein sequence ID" value="NP_001342333.1"/>
</dbReference>
<dbReference type="UCSC" id="uc060wjr.1">
    <property type="organism name" value="human"/>
</dbReference>
<dbReference type="AGR" id="HGNC:32460"/>
<dbReference type="GeneCards" id="ZNF724"/>
<dbReference type="HGNC" id="HGNC:32460">
    <property type="gene designation" value="ZNF724"/>
</dbReference>
<dbReference type="HPA" id="ENSG00000196081">
    <property type="expression patterns" value="Tissue enhanced (bone marrow, esophagus)"/>
</dbReference>
<dbReference type="neXtProt" id="NX_A8MTY0"/>
<dbReference type="OpenTargets" id="ENSG00000196081"/>
<dbReference type="VEuPathDB" id="HostDB:ENSG00000196081"/>
<dbReference type="eggNOG" id="KOG1721">
    <property type="taxonomic scope" value="Eukaryota"/>
</dbReference>
<dbReference type="GeneTree" id="ENSGT00940000154251"/>
<dbReference type="HOGENOM" id="CLU_002678_44_0_1"/>
<dbReference type="InParanoid" id="A8MTY0"/>
<dbReference type="OMA" id="CGQAFIC"/>
<dbReference type="OrthoDB" id="654211at2759"/>
<dbReference type="PAN-GO" id="A8MTY0">
    <property type="GO annotations" value="3 GO annotations based on evolutionary models"/>
</dbReference>
<dbReference type="PhylomeDB" id="A8MTY0"/>
<dbReference type="TreeFam" id="TF342117"/>
<dbReference type="PathwayCommons" id="A8MTY0"/>
<dbReference type="Reactome" id="R-HSA-212436">
    <property type="pathway name" value="Generic Transcription Pathway"/>
</dbReference>
<dbReference type="SignaLink" id="A8MTY0"/>
<dbReference type="ChiTaRS" id="ZNF724">
    <property type="organism name" value="human"/>
</dbReference>
<dbReference type="Pharos" id="A8MTY0">
    <property type="development level" value="Tdark"/>
</dbReference>
<dbReference type="PRO" id="PR:A8MTY0"/>
<dbReference type="Proteomes" id="UP000005640">
    <property type="component" value="Chromosome 19"/>
</dbReference>
<dbReference type="RNAct" id="A8MTY0">
    <property type="molecule type" value="protein"/>
</dbReference>
<dbReference type="Bgee" id="ENSG00000196081">
    <property type="expression patterns" value="Expressed in primordial germ cell in gonad and 101 other cell types or tissues"/>
</dbReference>
<dbReference type="ExpressionAtlas" id="A8MTY0">
    <property type="expression patterns" value="baseline and differential"/>
</dbReference>
<dbReference type="GO" id="GO:0005634">
    <property type="term" value="C:nucleus"/>
    <property type="evidence" value="ECO:0007669"/>
    <property type="project" value="UniProtKB-SubCell"/>
</dbReference>
<dbReference type="GO" id="GO:0000981">
    <property type="term" value="F:DNA-binding transcription factor activity, RNA polymerase II-specific"/>
    <property type="evidence" value="ECO:0000318"/>
    <property type="project" value="GO_Central"/>
</dbReference>
<dbReference type="GO" id="GO:0000978">
    <property type="term" value="F:RNA polymerase II cis-regulatory region sequence-specific DNA binding"/>
    <property type="evidence" value="ECO:0000318"/>
    <property type="project" value="GO_Central"/>
</dbReference>
<dbReference type="GO" id="GO:0008270">
    <property type="term" value="F:zinc ion binding"/>
    <property type="evidence" value="ECO:0007669"/>
    <property type="project" value="UniProtKB-KW"/>
</dbReference>
<dbReference type="GO" id="GO:0006355">
    <property type="term" value="P:regulation of DNA-templated transcription"/>
    <property type="evidence" value="ECO:0000318"/>
    <property type="project" value="GO_Central"/>
</dbReference>
<dbReference type="CDD" id="cd07765">
    <property type="entry name" value="KRAB_A-box"/>
    <property type="match status" value="1"/>
</dbReference>
<dbReference type="FunFam" id="3.30.160.60:FF:000374">
    <property type="entry name" value="Zinc finger protein 208"/>
    <property type="match status" value="1"/>
</dbReference>
<dbReference type="FunFam" id="3.30.160.60:FF:000023">
    <property type="entry name" value="zinc finger protein 37 homolog"/>
    <property type="match status" value="1"/>
</dbReference>
<dbReference type="FunFam" id="3.30.160.60:FF:000120">
    <property type="entry name" value="Zinc finger protein 430"/>
    <property type="match status" value="7"/>
</dbReference>
<dbReference type="FunFam" id="3.30.160.60:FF:002254">
    <property type="entry name" value="Zinc finger protein 540"/>
    <property type="match status" value="1"/>
</dbReference>
<dbReference type="FunFam" id="3.30.160.60:FF:000895">
    <property type="entry name" value="Zinc finger protein 597"/>
    <property type="match status" value="1"/>
</dbReference>
<dbReference type="FunFam" id="3.30.160.60:FF:000362">
    <property type="entry name" value="Zinc finger protein 606"/>
    <property type="match status" value="3"/>
</dbReference>
<dbReference type="FunFam" id="3.30.160.60:FF:002483">
    <property type="entry name" value="Zinc finger protein 90"/>
    <property type="match status" value="2"/>
</dbReference>
<dbReference type="Gene3D" id="6.10.140.140">
    <property type="match status" value="1"/>
</dbReference>
<dbReference type="Gene3D" id="3.30.160.60">
    <property type="entry name" value="Classic Zinc Finger"/>
    <property type="match status" value="16"/>
</dbReference>
<dbReference type="InterPro" id="IPR001909">
    <property type="entry name" value="KRAB"/>
</dbReference>
<dbReference type="InterPro" id="IPR036051">
    <property type="entry name" value="KRAB_dom_sf"/>
</dbReference>
<dbReference type="InterPro" id="IPR036236">
    <property type="entry name" value="Znf_C2H2_sf"/>
</dbReference>
<dbReference type="InterPro" id="IPR013087">
    <property type="entry name" value="Znf_C2H2_type"/>
</dbReference>
<dbReference type="PANTHER" id="PTHR24394">
    <property type="entry name" value="ZINC FINGER PROTEIN"/>
    <property type="match status" value="1"/>
</dbReference>
<dbReference type="PANTHER" id="PTHR24394:SF48">
    <property type="entry name" value="ZINC FINGER PROTEIN 771"/>
    <property type="match status" value="1"/>
</dbReference>
<dbReference type="Pfam" id="PF01352">
    <property type="entry name" value="KRAB"/>
    <property type="match status" value="1"/>
</dbReference>
<dbReference type="Pfam" id="PF00096">
    <property type="entry name" value="zf-C2H2"/>
    <property type="match status" value="14"/>
</dbReference>
<dbReference type="SMART" id="SM00349">
    <property type="entry name" value="KRAB"/>
    <property type="match status" value="1"/>
</dbReference>
<dbReference type="SMART" id="SM00355">
    <property type="entry name" value="ZnF_C2H2"/>
    <property type="match status" value="16"/>
</dbReference>
<dbReference type="SUPFAM" id="SSF57667">
    <property type="entry name" value="beta-beta-alpha zinc fingers"/>
    <property type="match status" value="9"/>
</dbReference>
<dbReference type="SUPFAM" id="SSF109640">
    <property type="entry name" value="KRAB domain (Kruppel-associated box)"/>
    <property type="match status" value="1"/>
</dbReference>
<dbReference type="PROSITE" id="PS50805">
    <property type="entry name" value="KRAB"/>
    <property type="match status" value="1"/>
</dbReference>
<dbReference type="PROSITE" id="PS00028">
    <property type="entry name" value="ZINC_FINGER_C2H2_1"/>
    <property type="match status" value="14"/>
</dbReference>
<dbReference type="PROSITE" id="PS50157">
    <property type="entry name" value="ZINC_FINGER_C2H2_2"/>
    <property type="match status" value="16"/>
</dbReference>
<feature type="chain" id="PRO_0000332283" description="Zinc finger protein 724">
    <location>
        <begin position="1"/>
        <end position="619"/>
    </location>
</feature>
<feature type="domain" description="KRAB" evidence="3">
    <location>
        <begin position="4"/>
        <end position="75"/>
    </location>
</feature>
<feature type="zinc finger region" description="C2H2-type 1" evidence="2">
    <location>
        <begin position="170"/>
        <end position="192"/>
    </location>
</feature>
<feature type="zinc finger region" description="C2H2-type 2; degenerate" evidence="2">
    <location>
        <begin position="198"/>
        <end position="220"/>
    </location>
</feature>
<feature type="zinc finger region" description="C2H2-type 3" evidence="2">
    <location>
        <begin position="226"/>
        <end position="248"/>
    </location>
</feature>
<feature type="zinc finger region" description="C2H2-type 4; degenerate" evidence="2">
    <location>
        <begin position="254"/>
        <end position="276"/>
    </location>
</feature>
<feature type="zinc finger region" description="C2H2-type 5" evidence="2">
    <location>
        <begin position="282"/>
        <end position="304"/>
    </location>
</feature>
<feature type="zinc finger region" description="C2H2-type 6" evidence="2">
    <location>
        <begin position="310"/>
        <end position="332"/>
    </location>
</feature>
<feature type="zinc finger region" description="C2H2-type 7" evidence="2">
    <location>
        <begin position="338"/>
        <end position="360"/>
    </location>
</feature>
<feature type="zinc finger region" description="C2H2-type 8" evidence="2">
    <location>
        <begin position="366"/>
        <end position="388"/>
    </location>
</feature>
<feature type="zinc finger region" description="C2H2-type 9" evidence="2">
    <location>
        <begin position="394"/>
        <end position="416"/>
    </location>
</feature>
<feature type="zinc finger region" description="C2H2-type 10" evidence="2">
    <location>
        <begin position="422"/>
        <end position="444"/>
    </location>
</feature>
<feature type="zinc finger region" description="C2H2-type 11" evidence="2">
    <location>
        <begin position="450"/>
        <end position="472"/>
    </location>
</feature>
<feature type="zinc finger region" description="C2H2-type 12" evidence="2">
    <location>
        <begin position="478"/>
        <end position="500"/>
    </location>
</feature>
<feature type="zinc finger region" description="C2H2-type 13" evidence="2">
    <location>
        <begin position="506"/>
        <end position="528"/>
    </location>
</feature>
<feature type="zinc finger region" description="C2H2-type 14" evidence="2">
    <location>
        <begin position="534"/>
        <end position="556"/>
    </location>
</feature>
<feature type="zinc finger region" description="C2H2-type 15" evidence="2">
    <location>
        <begin position="562"/>
        <end position="584"/>
    </location>
</feature>
<feature type="zinc finger region" description="C2H2-type 16" evidence="2">
    <location>
        <begin position="590"/>
        <end position="612"/>
    </location>
</feature>
<feature type="sequence conflict" description="In Ref. 1; BAG62802." evidence="4" ref="1">
    <original>K</original>
    <variation>R</variation>
    <location>
        <position position="525"/>
    </location>
</feature>
<comment type="function">
    <text evidence="1">May be involved in transcriptional regulation.</text>
</comment>
<comment type="subcellular location">
    <subcellularLocation>
        <location evidence="4">Nucleus</location>
    </subcellularLocation>
</comment>
<comment type="similarity">
    <text evidence="4">Belongs to the krueppel C2H2-type zinc-finger protein family.</text>
</comment>
<accession>A8MTY0</accession>
<accession>B4DVU0</accession>
<evidence type="ECO:0000250" key="1"/>
<evidence type="ECO:0000255" key="2">
    <source>
        <dbReference type="PROSITE-ProRule" id="PRU00042"/>
    </source>
</evidence>
<evidence type="ECO:0000255" key="3">
    <source>
        <dbReference type="PROSITE-ProRule" id="PRU00119"/>
    </source>
</evidence>
<evidence type="ECO:0000305" key="4"/>
<evidence type="ECO:0000312" key="5">
    <source>
        <dbReference type="HGNC" id="HGNC:32460"/>
    </source>
</evidence>